<accession>P78036</accession>
<feature type="chain" id="PRO_0000046163" description="Probable cation-transporting P-type ATPase">
    <location>
        <begin position="1"/>
        <end position="872"/>
    </location>
</feature>
<feature type="topological domain" description="Cytoplasmic" evidence="2">
    <location>
        <begin position="1"/>
        <end position="41"/>
    </location>
</feature>
<feature type="transmembrane region" description="Helical" evidence="2">
    <location>
        <begin position="42"/>
        <end position="62"/>
    </location>
</feature>
<feature type="topological domain" description="Extracellular" evidence="2">
    <location>
        <begin position="63"/>
        <end position="79"/>
    </location>
</feature>
<feature type="transmembrane region" description="Helical" evidence="2">
    <location>
        <begin position="80"/>
        <end position="100"/>
    </location>
</feature>
<feature type="topological domain" description="Cytoplasmic" evidence="2">
    <location>
        <begin position="101"/>
        <end position="237"/>
    </location>
</feature>
<feature type="transmembrane region" description="Helical" evidence="2">
    <location>
        <begin position="238"/>
        <end position="257"/>
    </location>
</feature>
<feature type="topological domain" description="Extracellular" evidence="2">
    <location>
        <begin position="258"/>
        <end position="275"/>
    </location>
</feature>
<feature type="transmembrane region" description="Helical" evidence="2">
    <location>
        <begin position="276"/>
        <end position="293"/>
    </location>
</feature>
<feature type="topological domain" description="Cytoplasmic" evidence="2">
    <location>
        <begin position="294"/>
        <end position="642"/>
    </location>
</feature>
<feature type="transmembrane region" description="Helical" evidence="2">
    <location>
        <begin position="643"/>
        <end position="662"/>
    </location>
</feature>
<feature type="topological domain" description="Extracellular" evidence="2">
    <location>
        <begin position="663"/>
        <end position="685"/>
    </location>
</feature>
<feature type="transmembrane region" description="Helical" evidence="2">
    <location>
        <begin position="686"/>
        <end position="706"/>
    </location>
</feature>
<feature type="topological domain" description="Cytoplasmic" evidence="2">
    <location>
        <begin position="707"/>
        <end position="724"/>
    </location>
</feature>
<feature type="transmembrane region" description="Helical" evidence="2">
    <location>
        <begin position="725"/>
        <end position="747"/>
    </location>
</feature>
<feature type="topological domain" description="Extracellular" evidence="2">
    <location>
        <begin position="748"/>
        <end position="768"/>
    </location>
</feature>
<feature type="transmembrane region" description="Helical" evidence="2">
    <location>
        <begin position="769"/>
        <end position="788"/>
    </location>
</feature>
<feature type="topological domain" description="Cytoplasmic" evidence="2">
    <location>
        <begin position="789"/>
        <end position="801"/>
    </location>
</feature>
<feature type="transmembrane region" description="Helical" evidence="2">
    <location>
        <begin position="802"/>
        <end position="824"/>
    </location>
</feature>
<feature type="topological domain" description="Extracellular" evidence="2">
    <location>
        <begin position="825"/>
        <end position="842"/>
    </location>
</feature>
<feature type="transmembrane region" description="Helical" evidence="2">
    <location>
        <begin position="843"/>
        <end position="863"/>
    </location>
</feature>
<feature type="topological domain" description="Cytoplasmic" evidence="2">
    <location>
        <begin position="864"/>
        <end position="872"/>
    </location>
</feature>
<feature type="active site" description="4-aspartylphosphate intermediate" evidence="1">
    <location>
        <position position="331"/>
    </location>
</feature>
<feature type="binding site" evidence="1">
    <location>
        <position position="587"/>
    </location>
    <ligand>
        <name>Mg(2+)</name>
        <dbReference type="ChEBI" id="CHEBI:18420"/>
    </ligand>
</feature>
<feature type="binding site" evidence="1">
    <location>
        <position position="591"/>
    </location>
    <ligand>
        <name>Mg(2+)</name>
        <dbReference type="ChEBI" id="CHEBI:18420"/>
    </ligand>
</feature>
<dbReference type="EC" id="7.2.2.-"/>
<dbReference type="EMBL" id="U00089">
    <property type="protein sequence ID" value="AAB96270.1"/>
    <property type="molecule type" value="Genomic_DNA"/>
</dbReference>
<dbReference type="PIR" id="S73948">
    <property type="entry name" value="S73948"/>
</dbReference>
<dbReference type="RefSeq" id="NP_109897.1">
    <property type="nucleotide sequence ID" value="NC_000912.1"/>
</dbReference>
<dbReference type="RefSeq" id="WP_010874566.1">
    <property type="nucleotide sequence ID" value="NZ_OU342337.1"/>
</dbReference>
<dbReference type="SMR" id="P78036"/>
<dbReference type="IntAct" id="P78036">
    <property type="interactions" value="1"/>
</dbReference>
<dbReference type="STRING" id="272634.MPN_209"/>
<dbReference type="EnsemblBacteria" id="AAB96270">
    <property type="protein sequence ID" value="AAB96270"/>
    <property type="gene ID" value="MPN_209"/>
</dbReference>
<dbReference type="KEGG" id="mpn:MPN_209"/>
<dbReference type="PATRIC" id="fig|272634.6.peg.228"/>
<dbReference type="HOGENOM" id="CLU_002360_1_1_14"/>
<dbReference type="OrthoDB" id="9813266at2"/>
<dbReference type="BioCyc" id="MPNE272634:G1GJ3-339-MONOMER"/>
<dbReference type="Proteomes" id="UP000000808">
    <property type="component" value="Chromosome"/>
</dbReference>
<dbReference type="GO" id="GO:0005886">
    <property type="term" value="C:plasma membrane"/>
    <property type="evidence" value="ECO:0007669"/>
    <property type="project" value="UniProtKB-SubCell"/>
</dbReference>
<dbReference type="GO" id="GO:0005524">
    <property type="term" value="F:ATP binding"/>
    <property type="evidence" value="ECO:0007669"/>
    <property type="project" value="UniProtKB-KW"/>
</dbReference>
<dbReference type="GO" id="GO:0016887">
    <property type="term" value="F:ATP hydrolysis activity"/>
    <property type="evidence" value="ECO:0007669"/>
    <property type="project" value="InterPro"/>
</dbReference>
<dbReference type="GO" id="GO:0046872">
    <property type="term" value="F:metal ion binding"/>
    <property type="evidence" value="ECO:0007669"/>
    <property type="project" value="UniProtKB-KW"/>
</dbReference>
<dbReference type="FunFam" id="1.20.1110.10:FF:000154">
    <property type="match status" value="1"/>
</dbReference>
<dbReference type="Gene3D" id="3.40.1110.10">
    <property type="entry name" value="Calcium-transporting ATPase, cytoplasmic domain N"/>
    <property type="match status" value="2"/>
</dbReference>
<dbReference type="Gene3D" id="2.70.150.10">
    <property type="entry name" value="Calcium-transporting ATPase, cytoplasmic transduction domain A"/>
    <property type="match status" value="1"/>
</dbReference>
<dbReference type="Gene3D" id="1.20.1110.10">
    <property type="entry name" value="Calcium-transporting ATPase, transmembrane domain"/>
    <property type="match status" value="2"/>
</dbReference>
<dbReference type="Gene3D" id="3.40.50.1000">
    <property type="entry name" value="HAD superfamily/HAD-like"/>
    <property type="match status" value="2"/>
</dbReference>
<dbReference type="InterPro" id="IPR006068">
    <property type="entry name" value="ATPase_P-typ_cation-transptr_C"/>
</dbReference>
<dbReference type="InterPro" id="IPR004014">
    <property type="entry name" value="ATPase_P-typ_cation-transptr_N"/>
</dbReference>
<dbReference type="InterPro" id="IPR023299">
    <property type="entry name" value="ATPase_P-typ_cyto_dom_N"/>
</dbReference>
<dbReference type="InterPro" id="IPR018303">
    <property type="entry name" value="ATPase_P-typ_P_site"/>
</dbReference>
<dbReference type="InterPro" id="IPR023298">
    <property type="entry name" value="ATPase_P-typ_TM_dom_sf"/>
</dbReference>
<dbReference type="InterPro" id="IPR008250">
    <property type="entry name" value="ATPase_P-typ_transduc_dom_A_sf"/>
</dbReference>
<dbReference type="InterPro" id="IPR036412">
    <property type="entry name" value="HAD-like_sf"/>
</dbReference>
<dbReference type="InterPro" id="IPR023214">
    <property type="entry name" value="HAD_sf"/>
</dbReference>
<dbReference type="InterPro" id="IPR001757">
    <property type="entry name" value="P_typ_ATPase"/>
</dbReference>
<dbReference type="InterPro" id="IPR044492">
    <property type="entry name" value="P_typ_ATPase_HD_dom"/>
</dbReference>
<dbReference type="NCBIfam" id="TIGR01494">
    <property type="entry name" value="ATPase_P-type"/>
    <property type="match status" value="2"/>
</dbReference>
<dbReference type="PANTHER" id="PTHR42861">
    <property type="entry name" value="CALCIUM-TRANSPORTING ATPASE"/>
    <property type="match status" value="1"/>
</dbReference>
<dbReference type="Pfam" id="PF00689">
    <property type="entry name" value="Cation_ATPase_C"/>
    <property type="match status" value="1"/>
</dbReference>
<dbReference type="Pfam" id="PF00690">
    <property type="entry name" value="Cation_ATPase_N"/>
    <property type="match status" value="1"/>
</dbReference>
<dbReference type="Pfam" id="PF00122">
    <property type="entry name" value="E1-E2_ATPase"/>
    <property type="match status" value="1"/>
</dbReference>
<dbReference type="Pfam" id="PF00702">
    <property type="entry name" value="Hydrolase"/>
    <property type="match status" value="1"/>
</dbReference>
<dbReference type="PRINTS" id="PR00119">
    <property type="entry name" value="CATATPASE"/>
</dbReference>
<dbReference type="PRINTS" id="PR00120">
    <property type="entry name" value="HATPASE"/>
</dbReference>
<dbReference type="SFLD" id="SFLDG00002">
    <property type="entry name" value="C1.7:_P-type_atpase_like"/>
    <property type="match status" value="1"/>
</dbReference>
<dbReference type="SFLD" id="SFLDF00027">
    <property type="entry name" value="p-type_atpase"/>
    <property type="match status" value="1"/>
</dbReference>
<dbReference type="SMART" id="SM00831">
    <property type="entry name" value="Cation_ATPase_N"/>
    <property type="match status" value="1"/>
</dbReference>
<dbReference type="SUPFAM" id="SSF81653">
    <property type="entry name" value="Calcium ATPase, transduction domain A"/>
    <property type="match status" value="1"/>
</dbReference>
<dbReference type="SUPFAM" id="SSF81665">
    <property type="entry name" value="Calcium ATPase, transmembrane domain M"/>
    <property type="match status" value="1"/>
</dbReference>
<dbReference type="SUPFAM" id="SSF56784">
    <property type="entry name" value="HAD-like"/>
    <property type="match status" value="1"/>
</dbReference>
<dbReference type="PROSITE" id="PS00154">
    <property type="entry name" value="ATPASE_E1_E2"/>
    <property type="match status" value="1"/>
</dbReference>
<evidence type="ECO:0000250" key="1"/>
<evidence type="ECO:0000255" key="2"/>
<evidence type="ECO:0000305" key="3"/>
<reference key="1">
    <citation type="journal article" date="1996" name="Nucleic Acids Res.">
        <title>Complete sequence analysis of the genome of the bacterium Mycoplasma pneumoniae.</title>
        <authorList>
            <person name="Himmelreich R."/>
            <person name="Hilbert H."/>
            <person name="Plagens H."/>
            <person name="Pirkl E."/>
            <person name="Li B.-C."/>
            <person name="Herrmann R."/>
        </authorList>
    </citation>
    <scope>NUCLEOTIDE SEQUENCE [LARGE SCALE GENOMIC DNA]</scope>
    <source>
        <strain>ATCC 29342 / M129 / Subtype 1</strain>
    </source>
</reference>
<name>ATCL_MYCPN</name>
<proteinExistence type="inferred from homology"/>
<sequence length="872" mass="94968">MNKWTGLSAAAVLESRAQHGANLIPTKKLTPFWLLFLEQFKSLVVILLLVATILSLVVAIISGVNANWLFDHNLVIEWTQPFVILITVLANSLIGSIQEFKAQKSAHTLKSLTQPFTRVFREEGLVSLPVGEVVVGDIIFLEAGDIIPADGKVLQANHLRCMESFLTGESVPVDKSVVNTGGKGLLEQTNLLFSGAQVVFGSGVFEVTAVGLNTQVGQIVKTVDSSATKLSPLQQKLEKVGKWFSWFGLGLFVVVFLVQLGLLGFHNFSANWSIALIGAIALVVAIIPEGLVTFINVIFALSVQKLTKQKAIIKYLAAIETLGGVQIICTDKTGTLTQNKMKVVDYFCFSNTTQTDLARALCLCNNATVNTNGDSTGDPTEIALLQWLDRDGLELNHYTRVYEKAFDSNRKLMSVVVQKDNRFIVIVKGAHDVLLPLCKGLDSNQIKPLIDERASNGLRNLAVGLKVLYCFDPENTQTVNELESELDFLGSVSLQDPPRIESKAAIMACHQANITPIMITGDHLKTATAIAKELGILTDERQAILGVDLDPAKIMEYRVFARVTPQQKLEIVNAWKQAGYTVAVTGDGVNDAPALVTSDVGCCMGQTGVDIAKDAADVIISDDNFATIVNGIEQGRKTFLTCKRVLFNLFLTSIAGTIVVLLGLFVLGEVFREQLSKANHNFQVFTPTQLLIINLFVHGFPAVALAIQPVQEKLMLKPFSTKNLFYNRGGFDLIWQSLLLSFLTLLFYSLGMVYAINDPELGKSGDLINRAGATCGFMVLGGSAALNSLNLMVDRPLVATNPKHYGIVWLGALSSIFVFLLIIFINPLGLVFSTLKDLTAHPVLIGYSFGGVLLYMTINEVVKLIRLSYGSV</sequence>
<keyword id="KW-0067">ATP-binding</keyword>
<keyword id="KW-1003">Cell membrane</keyword>
<keyword id="KW-0460">Magnesium</keyword>
<keyword id="KW-0472">Membrane</keyword>
<keyword id="KW-0479">Metal-binding</keyword>
<keyword id="KW-0547">Nucleotide-binding</keyword>
<keyword id="KW-0597">Phosphoprotein</keyword>
<keyword id="KW-1185">Reference proteome</keyword>
<keyword id="KW-1278">Translocase</keyword>
<keyword id="KW-0812">Transmembrane</keyword>
<keyword id="KW-1133">Transmembrane helix</keyword>
<protein>
    <recommendedName>
        <fullName>Probable cation-transporting P-type ATPase</fullName>
        <ecNumber>7.2.2.-</ecNumber>
    </recommendedName>
</protein>
<comment type="function">
    <text>Could mediate calcium influx.</text>
</comment>
<comment type="catalytic activity">
    <reaction>
        <text>ATP + H2O = ADP + phosphate + H(+)</text>
        <dbReference type="Rhea" id="RHEA:13065"/>
        <dbReference type="ChEBI" id="CHEBI:15377"/>
        <dbReference type="ChEBI" id="CHEBI:15378"/>
        <dbReference type="ChEBI" id="CHEBI:30616"/>
        <dbReference type="ChEBI" id="CHEBI:43474"/>
        <dbReference type="ChEBI" id="CHEBI:456216"/>
    </reaction>
</comment>
<comment type="subcellular location">
    <subcellularLocation>
        <location>Cell membrane</location>
        <topology>Multi-pass membrane protein</topology>
    </subcellularLocation>
</comment>
<comment type="similarity">
    <text evidence="3">Belongs to the cation transport ATPase (P-type) (TC 3.A.3) family. Type II subfamily.</text>
</comment>
<gene>
    <name type="primary">pacL</name>
    <name type="ordered locus">MPN_209</name>
    <name type="ORF">MP622</name>
</gene>
<organism>
    <name type="scientific">Mycoplasma pneumoniae (strain ATCC 29342 / M129 / Subtype 1)</name>
    <name type="common">Mycoplasmoides pneumoniae</name>
    <dbReference type="NCBI Taxonomy" id="272634"/>
    <lineage>
        <taxon>Bacteria</taxon>
        <taxon>Bacillati</taxon>
        <taxon>Mycoplasmatota</taxon>
        <taxon>Mycoplasmoidales</taxon>
        <taxon>Mycoplasmoidaceae</taxon>
        <taxon>Mycoplasmoides</taxon>
    </lineage>
</organism>